<dbReference type="EMBL" id="D13740">
    <property type="protein sequence ID" value="BAA02885.1"/>
    <property type="molecule type" value="Genomic_DNA"/>
</dbReference>
<dbReference type="EMBL" id="Z26877">
    <property type="protein sequence ID" value="CAA81490.1"/>
    <property type="molecule type" value="Genomic_DNA"/>
</dbReference>
<dbReference type="EMBL" id="Z28164">
    <property type="protein sequence ID" value="CAA82006.1"/>
    <property type="molecule type" value="Genomic_DNA"/>
</dbReference>
<dbReference type="EMBL" id="BK006944">
    <property type="protein sequence ID" value="DAA09001.1"/>
    <property type="molecule type" value="Genomic_DNA"/>
</dbReference>
<dbReference type="PIR" id="S33650">
    <property type="entry name" value="S33650"/>
</dbReference>
<dbReference type="RefSeq" id="NP_012757.1">
    <property type="nucleotide sequence ID" value="NM_001179730.1"/>
</dbReference>
<dbReference type="BioGRID" id="33974">
    <property type="interactions" value="76"/>
</dbReference>
<dbReference type="DIP" id="DIP-4607N"/>
<dbReference type="FunCoup" id="Q03178">
    <property type="interactions" value="94"/>
</dbReference>
<dbReference type="IntAct" id="Q03178">
    <property type="interactions" value="12"/>
</dbReference>
<dbReference type="MINT" id="Q03178"/>
<dbReference type="STRING" id="4932.YKL164C"/>
<dbReference type="iPTMnet" id="Q03178"/>
<dbReference type="PaxDb" id="4932-YKL164C"/>
<dbReference type="PeptideAtlas" id="Q03178"/>
<dbReference type="EnsemblFungi" id="YKL164C_mRNA">
    <property type="protein sequence ID" value="YKL164C"/>
    <property type="gene ID" value="YKL164C"/>
</dbReference>
<dbReference type="GeneID" id="853692"/>
<dbReference type="KEGG" id="sce:YKL164C"/>
<dbReference type="AGR" id="SGD:S000001647"/>
<dbReference type="SGD" id="S000001647">
    <property type="gene designation" value="PIR1"/>
</dbReference>
<dbReference type="VEuPathDB" id="FungiDB:YKL164C"/>
<dbReference type="eggNOG" id="ENOG502QQD8">
    <property type="taxonomic scope" value="Eukaryota"/>
</dbReference>
<dbReference type="GeneTree" id="ENSGT00940000176350"/>
<dbReference type="HOGENOM" id="CLU_039662_0_0_1"/>
<dbReference type="InParanoid" id="Q03178"/>
<dbReference type="OMA" id="AETCKSS"/>
<dbReference type="OrthoDB" id="5415592at2759"/>
<dbReference type="BioCyc" id="YEAST:G3O-31932-MONOMER"/>
<dbReference type="BioGRID-ORCS" id="853692">
    <property type="hits" value="0 hits in 10 CRISPR screens"/>
</dbReference>
<dbReference type="PRO" id="PR:Q03178"/>
<dbReference type="Proteomes" id="UP000002311">
    <property type="component" value="Chromosome XI"/>
</dbReference>
<dbReference type="RNAct" id="Q03178">
    <property type="molecule type" value="protein"/>
</dbReference>
<dbReference type="GO" id="GO:0005621">
    <property type="term" value="C:cellular bud scar"/>
    <property type="evidence" value="ECO:0000314"/>
    <property type="project" value="SGD"/>
</dbReference>
<dbReference type="GO" id="GO:0005576">
    <property type="term" value="C:extracellular region"/>
    <property type="evidence" value="ECO:0007669"/>
    <property type="project" value="UniProtKB-KW"/>
</dbReference>
<dbReference type="GO" id="GO:0009277">
    <property type="term" value="C:fungal-type cell wall"/>
    <property type="evidence" value="ECO:0000314"/>
    <property type="project" value="SGD"/>
</dbReference>
<dbReference type="GO" id="GO:0034399">
    <property type="term" value="C:nuclear periphery"/>
    <property type="evidence" value="ECO:0000314"/>
    <property type="project" value="SGD"/>
</dbReference>
<dbReference type="GO" id="GO:0005199">
    <property type="term" value="F:structural constituent of cell wall"/>
    <property type="evidence" value="ECO:0000314"/>
    <property type="project" value="SGD"/>
</dbReference>
<dbReference type="GO" id="GO:0031505">
    <property type="term" value="P:fungal-type cell wall organization"/>
    <property type="evidence" value="ECO:0000315"/>
    <property type="project" value="SGD"/>
</dbReference>
<dbReference type="GO" id="GO:0006886">
    <property type="term" value="P:intracellular protein transport"/>
    <property type="evidence" value="ECO:0000315"/>
    <property type="project" value="SGD"/>
</dbReference>
<dbReference type="InterPro" id="IPR054508">
    <property type="entry name" value="PIR1-like_C"/>
</dbReference>
<dbReference type="InterPro" id="IPR051153">
    <property type="entry name" value="Yeast_CWMannoprotein_PIR"/>
</dbReference>
<dbReference type="InterPro" id="IPR000420">
    <property type="entry name" value="Yeast_PIR_rpt"/>
</dbReference>
<dbReference type="PANTHER" id="PTHR47254">
    <property type="entry name" value="CELL WALL MANNOPROTEIN CIS3-RELATED"/>
    <property type="match status" value="1"/>
</dbReference>
<dbReference type="PANTHER" id="PTHR47254:SF1">
    <property type="entry name" value="CELL WALL MANNOPROTEIN CIS3-RELATED"/>
    <property type="match status" value="1"/>
</dbReference>
<dbReference type="Pfam" id="PF00399">
    <property type="entry name" value="PIR"/>
    <property type="match status" value="8"/>
</dbReference>
<dbReference type="Pfam" id="PF22799">
    <property type="entry name" value="PIR1-like_C"/>
    <property type="match status" value="1"/>
</dbReference>
<dbReference type="PROSITE" id="PS00929">
    <property type="entry name" value="PIR_REPEAT_1"/>
    <property type="match status" value="8"/>
</dbReference>
<dbReference type="PROSITE" id="PS50256">
    <property type="entry name" value="PIR_REPEAT_2"/>
    <property type="match status" value="8"/>
</dbReference>
<keyword id="KW-0134">Cell wall</keyword>
<keyword id="KW-0961">Cell wall biogenesis/degradation</keyword>
<keyword id="KW-0165">Cleavage on pair of basic residues</keyword>
<keyword id="KW-0903">Direct protein sequencing</keyword>
<keyword id="KW-0325">Glycoprotein</keyword>
<keyword id="KW-1185">Reference proteome</keyword>
<keyword id="KW-0677">Repeat</keyword>
<keyword id="KW-0964">Secreted</keyword>
<keyword id="KW-0732">Signal</keyword>
<gene>
    <name type="primary">PIR1</name>
    <name type="synonym">CCW6</name>
    <name type="ordered locus">YKL164C</name>
    <name type="ORF">YKL618</name>
</gene>
<proteinExistence type="evidence at protein level"/>
<protein>
    <recommendedName>
        <fullName>Cell wall mannoprotein PIR1</fullName>
    </recommendedName>
    <alternativeName>
        <fullName>Covalently-linked cell wall protein 6</fullName>
    </alternativeName>
    <alternativeName>
        <fullName>Protein with internal repeats 1</fullName>
    </alternativeName>
</protein>
<accession>Q03178</accession>
<accession>D6VX35</accession>
<comment type="function">
    <text evidence="3 8 11">Component of the outer cell wall layer. Required for stability of the cell wall and for optimal growth. Required for resistance against several antifungal and cell wall-perturbing agents and for tolerance to heat shock.</text>
</comment>
<comment type="subcellular location">
    <subcellularLocation>
        <location evidence="9 11 12">Secreted</location>
        <location evidence="9 11 12">Cell wall</location>
    </subcellularLocation>
    <text>Covalently attached to the cell wall.</text>
</comment>
<comment type="induction">
    <text evidence="4 5 7">Positively regulated by signaling through MPK1 in response to cell wall perturbation. Expression is also regulated by the SWI5 transcription factor.</text>
</comment>
<comment type="domain">
    <text evidence="1">The PIR1/2/3 repeats are required for covalent linkage to the cell wall (By similarity). Their number varies among different strains of S.cerevisiae.</text>
</comment>
<comment type="PTM">
    <text evidence="1">Covalently linked to beta-1,3-glucan of the inner cell wall layer via an alkali-sensitive ester linkage between the gamma-carboxyl group of glutamic acids, arising from specific glutamines within the PIR1/2/3 repeats, and hydroxyl groups of glucoses of beta-1,3-glucan chains.</text>
</comment>
<comment type="PTM">
    <text evidence="12">O-glycosylated. Extensively O-mannosylated.</text>
</comment>
<comment type="miscellaneous">
    <text evidence="6">Present with 1170 molecules/cell in log phase SD medium.</text>
</comment>
<comment type="similarity">
    <text evidence="13">Belongs to the PIR protein family.</text>
</comment>
<feature type="signal peptide" evidence="12">
    <location>
        <begin position="1"/>
        <end position="18"/>
    </location>
</feature>
<feature type="propeptide" id="PRO_0000033254" evidence="12">
    <location>
        <begin position="19"/>
        <end position="63"/>
    </location>
</feature>
<feature type="chain" id="PRO_0000033255" description="Cell wall mannoprotein PIR1">
    <location>
        <begin position="64"/>
        <end position="341"/>
    </location>
</feature>
<feature type="repeat" description="PIR1/2/3 1" evidence="2 10">
    <location>
        <begin position="64"/>
        <end position="82"/>
    </location>
</feature>
<feature type="repeat" description="PIR1/2/3 2" evidence="2 10">
    <location>
        <begin position="83"/>
        <end position="101"/>
    </location>
</feature>
<feature type="repeat" description="PIR1/2/3 3" evidence="2 10">
    <location>
        <begin position="102"/>
        <end position="125"/>
    </location>
</feature>
<feature type="repeat" description="PIR1/2/3 4" evidence="2 10">
    <location>
        <begin position="126"/>
        <end position="144"/>
    </location>
</feature>
<feature type="repeat" description="PIR1/2/3 5" evidence="2 10">
    <location>
        <begin position="145"/>
        <end position="163"/>
    </location>
</feature>
<feature type="repeat" description="PIR1/2/3 6" evidence="2 10">
    <location>
        <begin position="164"/>
        <end position="182"/>
    </location>
</feature>
<feature type="repeat" description="PIR1/2/3 7" evidence="2 10">
    <location>
        <begin position="183"/>
        <end position="201"/>
    </location>
</feature>
<feature type="repeat" description="PIR1/2/3 8" evidence="2 10">
    <location>
        <begin position="202"/>
        <end position="220"/>
    </location>
</feature>
<feature type="site" description="Cleavage; by KEX2">
    <location>
        <begin position="63"/>
        <end position="64"/>
    </location>
</feature>
<feature type="site" description="Covalent attachment to cell wall glycan" evidence="1">
    <location>
        <position position="74"/>
    </location>
</feature>
<feature type="site" description="Covalent attachment to cell wall glycan" evidence="1">
    <location>
        <position position="93"/>
    </location>
</feature>
<feature type="site" description="Covalent attachment to cell wall glycan" evidence="1">
    <location>
        <position position="112"/>
    </location>
</feature>
<feature type="site" description="Covalent attachment to cell wall glycan" evidence="1">
    <location>
        <position position="136"/>
    </location>
</feature>
<feature type="site" description="Covalent attachment to cell wall glycan" evidence="1">
    <location>
        <position position="155"/>
    </location>
</feature>
<feature type="site" description="Covalent attachment to cell wall glycan" evidence="1">
    <location>
        <position position="174"/>
    </location>
</feature>
<feature type="site" description="Covalent attachment to cell wall glycan" evidence="1">
    <location>
        <position position="193"/>
    </location>
</feature>
<feature type="site" description="Covalent attachment to cell wall glycan" evidence="1">
    <location>
        <position position="212"/>
    </location>
</feature>
<name>PIR1_YEAST</name>
<organism>
    <name type="scientific">Saccharomyces cerevisiae (strain ATCC 204508 / S288c)</name>
    <name type="common">Baker's yeast</name>
    <dbReference type="NCBI Taxonomy" id="559292"/>
    <lineage>
        <taxon>Eukaryota</taxon>
        <taxon>Fungi</taxon>
        <taxon>Dikarya</taxon>
        <taxon>Ascomycota</taxon>
        <taxon>Saccharomycotina</taxon>
        <taxon>Saccharomycetes</taxon>
        <taxon>Saccharomycetales</taxon>
        <taxon>Saccharomycetaceae</taxon>
        <taxon>Saccharomyces</taxon>
    </lineage>
</organism>
<reference key="1">
    <citation type="journal article" date="1993" name="Yeast">
        <title>Three yeast genes, PIR1, PIR2 and PIR3, containing internal tandem repeats, are related to each other, and PIR1 and PIR2 are required for tolerance to heat shock.</title>
        <authorList>
            <person name="Toh-e A."/>
            <person name="Yasunaga S."/>
            <person name="Nisogi H."/>
            <person name="Tanaka K."/>
            <person name="Oguchi T."/>
            <person name="Matsui Y."/>
        </authorList>
    </citation>
    <scope>NUCLEOTIDE SEQUENCE [GENOMIC DNA]</scope>
    <source>
        <strain>RAY-3AD</strain>
    </source>
</reference>
<reference key="2">
    <citation type="journal article" date="1994" name="Yeast">
        <title>DNA sequencing of a 36.2 kb fragment located between the FAS1 and LAP loci of chromosome XI of Saccharomyces cerevisiae.</title>
        <authorList>
            <person name="Vandenbol M."/>
            <person name="Bolle P.-A."/>
            <person name="Dion C."/>
            <person name="Portetelle D."/>
            <person name="Hilger F."/>
        </authorList>
    </citation>
    <scope>NUCLEOTIDE SEQUENCE [GENOMIC DNA]</scope>
    <source>
        <strain>ATCC 204508 / S288c</strain>
    </source>
</reference>
<reference key="3">
    <citation type="journal article" date="1994" name="Nature">
        <title>Complete DNA sequence of yeast chromosome XI.</title>
        <authorList>
            <person name="Dujon B."/>
            <person name="Alexandraki D."/>
            <person name="Andre B."/>
            <person name="Ansorge W."/>
            <person name="Baladron V."/>
            <person name="Ballesta J.P.G."/>
            <person name="Banrevi A."/>
            <person name="Bolle P.-A."/>
            <person name="Bolotin-Fukuhara M."/>
            <person name="Bossier P."/>
            <person name="Bou G."/>
            <person name="Boyer J."/>
            <person name="Buitrago M.J."/>
            <person name="Cheret G."/>
            <person name="Colleaux L."/>
            <person name="Daignan-Fornier B."/>
            <person name="del Rey F."/>
            <person name="Dion C."/>
            <person name="Domdey H."/>
            <person name="Duesterhoeft A."/>
            <person name="Duesterhus S."/>
            <person name="Entian K.-D."/>
            <person name="Erfle H."/>
            <person name="Esteban P.F."/>
            <person name="Feldmann H."/>
            <person name="Fernandes L."/>
            <person name="Fobo G.M."/>
            <person name="Fritz C."/>
            <person name="Fukuhara H."/>
            <person name="Gabel C."/>
            <person name="Gaillon L."/>
            <person name="Garcia-Cantalejo J.M."/>
            <person name="Garcia-Ramirez J.J."/>
            <person name="Gent M.E."/>
            <person name="Ghazvini M."/>
            <person name="Goffeau A."/>
            <person name="Gonzalez A."/>
            <person name="Grothues D."/>
            <person name="Guerreiro P."/>
            <person name="Hegemann J.H."/>
            <person name="Hewitt N."/>
            <person name="Hilger F."/>
            <person name="Hollenberg C.P."/>
            <person name="Horaitis O."/>
            <person name="Indge K.J."/>
            <person name="Jacquier A."/>
            <person name="James C.M."/>
            <person name="Jauniaux J.-C."/>
            <person name="Jimenez A."/>
            <person name="Keuchel H."/>
            <person name="Kirchrath L."/>
            <person name="Kleine K."/>
            <person name="Koetter P."/>
            <person name="Legrain P."/>
            <person name="Liebl S."/>
            <person name="Louis E.J."/>
            <person name="Maia e Silva A."/>
            <person name="Marck C."/>
            <person name="Monnier A.-L."/>
            <person name="Moestl D."/>
            <person name="Mueller S."/>
            <person name="Obermaier B."/>
            <person name="Oliver S.G."/>
            <person name="Pallier C."/>
            <person name="Pascolo S."/>
            <person name="Pfeiffer F."/>
            <person name="Philippsen P."/>
            <person name="Planta R.J."/>
            <person name="Pohl F.M."/>
            <person name="Pohl T.M."/>
            <person name="Poehlmann R."/>
            <person name="Portetelle D."/>
            <person name="Purnelle B."/>
            <person name="Puzos V."/>
            <person name="Ramezani Rad M."/>
            <person name="Rasmussen S.W."/>
            <person name="Remacha M.A."/>
            <person name="Revuelta J.L."/>
            <person name="Richard G.-F."/>
            <person name="Rieger M."/>
            <person name="Rodrigues-Pousada C."/>
            <person name="Rose M."/>
            <person name="Rupp T."/>
            <person name="Santos M.A."/>
            <person name="Schwager C."/>
            <person name="Sensen C."/>
            <person name="Skala J."/>
            <person name="Soares H."/>
            <person name="Sor F."/>
            <person name="Stegemann J."/>
            <person name="Tettelin H."/>
            <person name="Thierry A."/>
            <person name="Tzermia M."/>
            <person name="Urrestarazu L.A."/>
            <person name="van Dyck L."/>
            <person name="van Vliet-Reedijk J.C."/>
            <person name="Valens M."/>
            <person name="Vandenbol M."/>
            <person name="Vilela C."/>
            <person name="Vissers S."/>
            <person name="von Wettstein D."/>
            <person name="Voss H."/>
            <person name="Wiemann S."/>
            <person name="Xu G."/>
            <person name="Zimmermann J."/>
            <person name="Haasemann M."/>
            <person name="Becker I."/>
            <person name="Mewes H.-W."/>
        </authorList>
    </citation>
    <scope>NUCLEOTIDE SEQUENCE [LARGE SCALE GENOMIC DNA]</scope>
    <source>
        <strain>ATCC 204508 / S288c</strain>
    </source>
</reference>
<reference key="4">
    <citation type="journal article" date="2014" name="G3 (Bethesda)">
        <title>The reference genome sequence of Saccharomyces cerevisiae: Then and now.</title>
        <authorList>
            <person name="Engel S.R."/>
            <person name="Dietrich F.S."/>
            <person name="Fisk D.G."/>
            <person name="Binkley G."/>
            <person name="Balakrishnan R."/>
            <person name="Costanzo M.C."/>
            <person name="Dwight S.S."/>
            <person name="Hitz B.C."/>
            <person name="Karra K."/>
            <person name="Nash R.S."/>
            <person name="Weng S."/>
            <person name="Wong E.D."/>
            <person name="Lloyd P."/>
            <person name="Skrzypek M.S."/>
            <person name="Miyasato S.R."/>
            <person name="Simison M."/>
            <person name="Cherry J.M."/>
        </authorList>
    </citation>
    <scope>GENOME REANNOTATION</scope>
    <source>
        <strain>ATCC 204508 / S288c</strain>
    </source>
</reference>
<reference key="5">
    <citation type="journal article" date="1997" name="Yeast">
        <title>Specific labelling of cell wall proteins by biotinylation. Identification of four covalently linked O-mannosylated proteins of Saccharomyces cerevisiae.</title>
        <authorList>
            <person name="Mrsa V."/>
            <person name="Seidl T."/>
            <person name="Gentzsch M."/>
            <person name="Tanner W."/>
        </authorList>
    </citation>
    <scope>PROTEIN SEQUENCE OF 19-25 AND 64-84</scope>
    <scope>CLEAVAGE BY KEX2</scope>
    <scope>GLYCOSYLATION</scope>
    <scope>SUBCELLULAR LOCATION</scope>
</reference>
<reference key="6">
    <citation type="journal article" date="1997" name="Proc. Natl. Acad. Sci. U.S.A.">
        <title>Stress proteins on the yeast cell surface determine resistance to osmotin, a plant antifungal protein.</title>
        <authorList>
            <person name="Yun D.-J."/>
            <person name="Zhao Y."/>
            <person name="Pardo J.M."/>
            <person name="Narasimhan M.L."/>
            <person name="Damsz B."/>
            <person name="Lee H."/>
            <person name="Abad L.R."/>
            <person name="D'Urzo M.P."/>
            <person name="Hasegawa P.M."/>
            <person name="Bressan R.A."/>
        </authorList>
    </citation>
    <scope>FUNCTION</scope>
    <scope>SUBCELLULAR LOCATION</scope>
</reference>
<reference key="7">
    <citation type="journal article" date="1999" name="Mol. Microbiol.">
        <title>Genome-wide analysis of gene expression regulated by the yeast cell wall integrity signalling pathway.</title>
        <authorList>
            <person name="Jung U.S."/>
            <person name="Levin D.E."/>
        </authorList>
    </citation>
    <scope>INDUCTION</scope>
</reference>
<reference key="8">
    <citation type="journal article" date="1999" name="Yeast">
        <title>Role of NaOH-extractable cell wall proteins Ccw5p, Ccw6p, Ccw7p and Ccw8p (members of the Pir protein family) in stability of the Saccharomyces cerevisiae cell wall.</title>
        <authorList>
            <person name="Mrsa V."/>
            <person name="Tanner W."/>
        </authorList>
    </citation>
    <scope>FUNCTION</scope>
</reference>
<reference key="9">
    <citation type="journal article" date="2001" name="Mol. Microbiol.">
        <title>Overlapping and distinct roles of the duplicated yeast transcription factors Ace2p and Swi5p.</title>
        <authorList>
            <person name="Doolin M.-T."/>
            <person name="Johnson A.L."/>
            <person name="Johnston L.H."/>
            <person name="Butler G."/>
        </authorList>
    </citation>
    <scope>INDUCTION</scope>
</reference>
<reference key="10">
    <citation type="journal article" date="2003" name="Nature">
        <title>Global analysis of protein expression in yeast.</title>
        <authorList>
            <person name="Ghaemmaghami S."/>
            <person name="Huh W.-K."/>
            <person name="Bower K."/>
            <person name="Howson R.W."/>
            <person name="Belle A."/>
            <person name="Dephoure N."/>
            <person name="O'Shea E.K."/>
            <person name="Weissman J.S."/>
        </authorList>
    </citation>
    <scope>LEVEL OF PROTEIN EXPRESSION [LARGE SCALE ANALYSIS]</scope>
</reference>
<reference key="11">
    <citation type="journal article" date="2004" name="Microbiology">
        <title>Increased mortality of Saccharomyces cerevisiae cell wall protein mutants.</title>
        <authorList>
            <person name="Teparic R."/>
            <person name="Stuparevic I."/>
            <person name="Mrsa V."/>
        </authorList>
    </citation>
    <scope>FUNCTION</scope>
</reference>
<reference key="12">
    <citation type="journal article" date="2004" name="Yeast">
        <title>Characterization of the transcriptional response to cell wall stress in Saccharomyces cerevisiae.</title>
        <authorList>
            <person name="Boorsma A."/>
            <person name="de Nobel H."/>
            <person name="ter Riet B."/>
            <person name="Bargmann B."/>
            <person name="Brul S."/>
            <person name="Hellingwerf K.J."/>
            <person name="Klis F.M."/>
        </authorList>
    </citation>
    <scope>INDUCTION</scope>
</reference>
<reference key="13">
    <citation type="journal article" date="2005" name="J. Biol. Chem.">
        <title>Comprehensive proteomic analysis of Saccharomyces cerevisiae cell walls: identification of proteins covalently attached via glycosylphosphatidylinositol remnants or mild alkali-sensitive linkages.</title>
        <authorList>
            <person name="Yin Q.Y."/>
            <person name="de Groot P.W.J."/>
            <person name="Dekker H.L."/>
            <person name="de Jong L."/>
            <person name="Klis F.M."/>
            <person name="de Koster C.G."/>
        </authorList>
    </citation>
    <scope>SUBCELLULAR LOCATION</scope>
    <scope>IDENTIFICATION BY MASS SPECTROMETRY</scope>
</reference>
<reference key="14">
    <citation type="journal article" date="2005" name="Nat. Genet.">
        <title>Intragenic tandem repeats generate functional variability.</title>
        <authorList>
            <person name="Verstrepen K.J."/>
            <person name="Jansen A."/>
            <person name="Lewitter F."/>
            <person name="Fink G.R."/>
        </authorList>
    </citation>
    <scope>REPEATS</scope>
</reference>
<sequence>MQYKKSLVASALVATSLAAYAPKDPWSTLTPSATYKGGITDYSSTFGIAVEPIATTASSKAKRAAAISQIGDGQIQATTKTTAAAVSQIGDGQIQATTKTKAAAVSQIGDGQIQATTKTTSAKTTAAAVSQIGDGQIQATTKTKAAAVSQIGDGQIQATTKTTAAAVSQIGDGQIQATTKTTAAAVSQIGDGQIQATTNTTVAPVSQITDGQIQATTLTSATIIPSPAPAPITNGTDPVTAETCKSSGTLEMNLKGGILTDGKGRIGSIVANRQFQFDGPPPQAGAIYAAGWSITPEGNLAIGDQDTFYQCLSGNFYNLYDEHIGTQCNAVHLQAIDLLNC</sequence>
<evidence type="ECO:0000250" key="1"/>
<evidence type="ECO:0000255" key="2">
    <source>
        <dbReference type="PROSITE-ProRule" id="PRU00149"/>
    </source>
</evidence>
<evidence type="ECO:0000269" key="3">
    <source>
    </source>
</evidence>
<evidence type="ECO:0000269" key="4">
    <source>
    </source>
</evidence>
<evidence type="ECO:0000269" key="5">
    <source>
    </source>
</evidence>
<evidence type="ECO:0000269" key="6">
    <source>
    </source>
</evidence>
<evidence type="ECO:0000269" key="7">
    <source>
    </source>
</evidence>
<evidence type="ECO:0000269" key="8">
    <source>
    </source>
</evidence>
<evidence type="ECO:0000269" key="9">
    <source>
    </source>
</evidence>
<evidence type="ECO:0000269" key="10">
    <source>
    </source>
</evidence>
<evidence type="ECO:0000269" key="11">
    <source>
    </source>
</evidence>
<evidence type="ECO:0000269" key="12">
    <source>
    </source>
</evidence>
<evidence type="ECO:0000305" key="13"/>